<sequence>MSGHSKWASIKHSKGKADKQRSKVFSKLSKEISVAAKLGDKDPAMNPRLRSAIQAAKSANMPKDNIERAIAKSSVNSETNYENLRYEGFGPDKIAVIVEALTDNKNRTASNVRSIFVKSGGNLGTQGSASHNFNQLGIIKIDKKEISDEQIFELAIESGADECISNDEFHEIQCPMSEIYNVKKNLEKTIANFISTEIEWVPLNSVDVEKDKVEAALEFLETLEDDDDVQSVYSNINFKNN</sequence>
<accession>Q4FN26</accession>
<evidence type="ECO:0000255" key="1">
    <source>
        <dbReference type="HAMAP-Rule" id="MF_00693"/>
    </source>
</evidence>
<evidence type="ECO:0000256" key="2">
    <source>
        <dbReference type="SAM" id="MobiDB-lite"/>
    </source>
</evidence>
<name>Y592_PELUB</name>
<protein>
    <recommendedName>
        <fullName evidence="1">Probable transcriptional regulatory protein SAR11_0592</fullName>
    </recommendedName>
</protein>
<feature type="chain" id="PRO_0000257093" description="Probable transcriptional regulatory protein SAR11_0592">
    <location>
        <begin position="1"/>
        <end position="241"/>
    </location>
</feature>
<feature type="region of interest" description="Disordered" evidence="2">
    <location>
        <begin position="1"/>
        <end position="24"/>
    </location>
</feature>
<reference key="1">
    <citation type="journal article" date="2005" name="Science">
        <title>Genome streamlining in a cosmopolitan oceanic bacterium.</title>
        <authorList>
            <person name="Giovannoni S.J."/>
            <person name="Tripp H.J."/>
            <person name="Givan S."/>
            <person name="Podar M."/>
            <person name="Vergin K.L."/>
            <person name="Baptista D."/>
            <person name="Bibbs L."/>
            <person name="Eads J."/>
            <person name="Richardson T.H."/>
            <person name="Noordewier M."/>
            <person name="Rappe M.S."/>
            <person name="Short J.M."/>
            <person name="Carrington J.C."/>
            <person name="Mathur E.J."/>
        </authorList>
    </citation>
    <scope>NUCLEOTIDE SEQUENCE [LARGE SCALE GENOMIC DNA]</scope>
    <source>
        <strain>HTCC1062</strain>
    </source>
</reference>
<proteinExistence type="inferred from homology"/>
<organism>
    <name type="scientific">Pelagibacter ubique (strain HTCC1062)</name>
    <dbReference type="NCBI Taxonomy" id="335992"/>
    <lineage>
        <taxon>Bacteria</taxon>
        <taxon>Pseudomonadati</taxon>
        <taxon>Pseudomonadota</taxon>
        <taxon>Alphaproteobacteria</taxon>
        <taxon>Candidatus Pelagibacterales</taxon>
        <taxon>Candidatus Pelagibacteraceae</taxon>
        <taxon>Candidatus Pelagibacter</taxon>
    </lineage>
</organism>
<dbReference type="EMBL" id="CP000084">
    <property type="protein sequence ID" value="AAZ21413.1"/>
    <property type="molecule type" value="Genomic_DNA"/>
</dbReference>
<dbReference type="RefSeq" id="WP_011281798.1">
    <property type="nucleotide sequence ID" value="NC_007205.1"/>
</dbReference>
<dbReference type="SMR" id="Q4FN26"/>
<dbReference type="STRING" id="335992.SAR11_0592"/>
<dbReference type="GeneID" id="66295097"/>
<dbReference type="KEGG" id="pub:SAR11_0592"/>
<dbReference type="eggNOG" id="COG0217">
    <property type="taxonomic scope" value="Bacteria"/>
</dbReference>
<dbReference type="HOGENOM" id="CLU_062974_3_0_5"/>
<dbReference type="OrthoDB" id="9781053at2"/>
<dbReference type="Proteomes" id="UP000002528">
    <property type="component" value="Chromosome"/>
</dbReference>
<dbReference type="GO" id="GO:0005737">
    <property type="term" value="C:cytoplasm"/>
    <property type="evidence" value="ECO:0007669"/>
    <property type="project" value="UniProtKB-SubCell"/>
</dbReference>
<dbReference type="GO" id="GO:0003677">
    <property type="term" value="F:DNA binding"/>
    <property type="evidence" value="ECO:0007669"/>
    <property type="project" value="UniProtKB-UniRule"/>
</dbReference>
<dbReference type="GO" id="GO:0006355">
    <property type="term" value="P:regulation of DNA-templated transcription"/>
    <property type="evidence" value="ECO:0007669"/>
    <property type="project" value="UniProtKB-UniRule"/>
</dbReference>
<dbReference type="FunFam" id="1.10.10.200:FF:000002">
    <property type="entry name" value="Probable transcriptional regulatory protein CLM62_37755"/>
    <property type="match status" value="1"/>
</dbReference>
<dbReference type="Gene3D" id="1.10.10.200">
    <property type="match status" value="1"/>
</dbReference>
<dbReference type="Gene3D" id="3.30.70.980">
    <property type="match status" value="2"/>
</dbReference>
<dbReference type="HAMAP" id="MF_00693">
    <property type="entry name" value="Transcrip_reg_TACO1"/>
    <property type="match status" value="1"/>
</dbReference>
<dbReference type="InterPro" id="IPR017856">
    <property type="entry name" value="Integrase-like_N"/>
</dbReference>
<dbReference type="InterPro" id="IPR048300">
    <property type="entry name" value="TACO1_YebC-like_2nd/3rd_dom"/>
</dbReference>
<dbReference type="InterPro" id="IPR049083">
    <property type="entry name" value="TACO1_YebC_N"/>
</dbReference>
<dbReference type="InterPro" id="IPR002876">
    <property type="entry name" value="Transcrip_reg_TACO1-like"/>
</dbReference>
<dbReference type="InterPro" id="IPR026564">
    <property type="entry name" value="Transcrip_reg_TACO1-like_dom3"/>
</dbReference>
<dbReference type="InterPro" id="IPR029072">
    <property type="entry name" value="YebC-like"/>
</dbReference>
<dbReference type="NCBIfam" id="NF001030">
    <property type="entry name" value="PRK00110.1"/>
    <property type="match status" value="1"/>
</dbReference>
<dbReference type="NCBIfam" id="NF009044">
    <property type="entry name" value="PRK12378.1"/>
    <property type="match status" value="1"/>
</dbReference>
<dbReference type="NCBIfam" id="TIGR01033">
    <property type="entry name" value="YebC/PmpR family DNA-binding transcriptional regulator"/>
    <property type="match status" value="1"/>
</dbReference>
<dbReference type="PANTHER" id="PTHR12532">
    <property type="entry name" value="TRANSLATIONAL ACTIVATOR OF CYTOCHROME C OXIDASE 1"/>
    <property type="match status" value="1"/>
</dbReference>
<dbReference type="PANTHER" id="PTHR12532:SF0">
    <property type="entry name" value="TRANSLATIONAL ACTIVATOR OF CYTOCHROME C OXIDASE 1"/>
    <property type="match status" value="1"/>
</dbReference>
<dbReference type="Pfam" id="PF20772">
    <property type="entry name" value="TACO1_YebC_N"/>
    <property type="match status" value="1"/>
</dbReference>
<dbReference type="Pfam" id="PF01709">
    <property type="entry name" value="Transcrip_reg"/>
    <property type="match status" value="1"/>
</dbReference>
<dbReference type="SUPFAM" id="SSF75625">
    <property type="entry name" value="YebC-like"/>
    <property type="match status" value="1"/>
</dbReference>
<gene>
    <name type="ordered locus">SAR11_0592</name>
</gene>
<comment type="subcellular location">
    <subcellularLocation>
        <location evidence="1">Cytoplasm</location>
    </subcellularLocation>
</comment>
<comment type="similarity">
    <text evidence="1">Belongs to the TACO1 family.</text>
</comment>
<keyword id="KW-0963">Cytoplasm</keyword>
<keyword id="KW-0238">DNA-binding</keyword>
<keyword id="KW-1185">Reference proteome</keyword>
<keyword id="KW-0804">Transcription</keyword>
<keyword id="KW-0805">Transcription regulation</keyword>